<gene>
    <name evidence="1" type="primary">rplC</name>
    <name type="ordered locus">SAV_4926</name>
</gene>
<sequence length="214" mass="22714">MAKQIKGILGEKLGMTQVWDENNRVVPVTVVKAGPNVVTQVRTNDSDGYESVQIAFGEIDPRKVNKPLKGHFAKADVTPRRHLVEIRTADASEYTLGQEITAETFEAGVKVDVTGKSKGKGFAGVMKRHNFKGLGAGHGTQRKHRSPGSIGGCATPGRVFKGLRMAGRMGNERVTTQNLTVHAVDAEKGLLLIKGAVPGPNGGLVLVRTAAKGA</sequence>
<keyword id="KW-1185">Reference proteome</keyword>
<keyword id="KW-0687">Ribonucleoprotein</keyword>
<keyword id="KW-0689">Ribosomal protein</keyword>
<keyword id="KW-0694">RNA-binding</keyword>
<keyword id="KW-0699">rRNA-binding</keyword>
<feature type="chain" id="PRO_0000077165" description="Large ribosomal subunit protein uL3">
    <location>
        <begin position="1"/>
        <end position="214"/>
    </location>
</feature>
<feature type="region of interest" description="Disordered" evidence="2">
    <location>
        <begin position="133"/>
        <end position="154"/>
    </location>
</feature>
<organism>
    <name type="scientific">Streptomyces avermitilis (strain ATCC 31267 / DSM 46492 / JCM 5070 / NBRC 14893 / NCIMB 12804 / NRRL 8165 / MA-4680)</name>
    <dbReference type="NCBI Taxonomy" id="227882"/>
    <lineage>
        <taxon>Bacteria</taxon>
        <taxon>Bacillati</taxon>
        <taxon>Actinomycetota</taxon>
        <taxon>Actinomycetes</taxon>
        <taxon>Kitasatosporales</taxon>
        <taxon>Streptomycetaceae</taxon>
        <taxon>Streptomyces</taxon>
    </lineage>
</organism>
<proteinExistence type="inferred from homology"/>
<comment type="function">
    <text evidence="1">One of the primary rRNA binding proteins, it binds directly near the 3'-end of the 23S rRNA, where it nucleates assembly of the 50S subunit.</text>
</comment>
<comment type="subunit">
    <text evidence="1">Part of the 50S ribosomal subunit. Forms a cluster with proteins L14 and L19.</text>
</comment>
<comment type="similarity">
    <text evidence="1">Belongs to the universal ribosomal protein uL3 family.</text>
</comment>
<dbReference type="EMBL" id="BA000030">
    <property type="protein sequence ID" value="BAC72638.1"/>
    <property type="molecule type" value="Genomic_DNA"/>
</dbReference>
<dbReference type="RefSeq" id="WP_010986342.1">
    <property type="nucleotide sequence ID" value="NZ_JZJK01000077.1"/>
</dbReference>
<dbReference type="SMR" id="Q82DP5"/>
<dbReference type="GeneID" id="41542009"/>
<dbReference type="KEGG" id="sma:SAVERM_4926"/>
<dbReference type="eggNOG" id="COG0087">
    <property type="taxonomic scope" value="Bacteria"/>
</dbReference>
<dbReference type="HOGENOM" id="CLU_044142_4_1_11"/>
<dbReference type="OrthoDB" id="9806135at2"/>
<dbReference type="Proteomes" id="UP000000428">
    <property type="component" value="Chromosome"/>
</dbReference>
<dbReference type="GO" id="GO:0022625">
    <property type="term" value="C:cytosolic large ribosomal subunit"/>
    <property type="evidence" value="ECO:0007669"/>
    <property type="project" value="TreeGrafter"/>
</dbReference>
<dbReference type="GO" id="GO:0019843">
    <property type="term" value="F:rRNA binding"/>
    <property type="evidence" value="ECO:0007669"/>
    <property type="project" value="UniProtKB-UniRule"/>
</dbReference>
<dbReference type="GO" id="GO:0003735">
    <property type="term" value="F:structural constituent of ribosome"/>
    <property type="evidence" value="ECO:0007669"/>
    <property type="project" value="InterPro"/>
</dbReference>
<dbReference type="GO" id="GO:0006412">
    <property type="term" value="P:translation"/>
    <property type="evidence" value="ECO:0007669"/>
    <property type="project" value="UniProtKB-UniRule"/>
</dbReference>
<dbReference type="FunFam" id="2.40.30.10:FF:000004">
    <property type="entry name" value="50S ribosomal protein L3"/>
    <property type="match status" value="1"/>
</dbReference>
<dbReference type="FunFam" id="3.30.160.810:FF:000003">
    <property type="entry name" value="50S ribosomal protein L3"/>
    <property type="match status" value="1"/>
</dbReference>
<dbReference type="Gene3D" id="3.30.160.810">
    <property type="match status" value="1"/>
</dbReference>
<dbReference type="Gene3D" id="2.40.30.10">
    <property type="entry name" value="Translation factors"/>
    <property type="match status" value="1"/>
</dbReference>
<dbReference type="HAMAP" id="MF_01325_B">
    <property type="entry name" value="Ribosomal_uL3_B"/>
    <property type="match status" value="1"/>
</dbReference>
<dbReference type="InterPro" id="IPR000597">
    <property type="entry name" value="Ribosomal_uL3"/>
</dbReference>
<dbReference type="InterPro" id="IPR019927">
    <property type="entry name" value="Ribosomal_uL3_bac/org-type"/>
</dbReference>
<dbReference type="InterPro" id="IPR019926">
    <property type="entry name" value="Ribosomal_uL3_CS"/>
</dbReference>
<dbReference type="InterPro" id="IPR009000">
    <property type="entry name" value="Transl_B-barrel_sf"/>
</dbReference>
<dbReference type="NCBIfam" id="TIGR03625">
    <property type="entry name" value="L3_bact"/>
    <property type="match status" value="1"/>
</dbReference>
<dbReference type="PANTHER" id="PTHR11229">
    <property type="entry name" value="50S RIBOSOMAL PROTEIN L3"/>
    <property type="match status" value="1"/>
</dbReference>
<dbReference type="PANTHER" id="PTHR11229:SF16">
    <property type="entry name" value="LARGE RIBOSOMAL SUBUNIT PROTEIN UL3C"/>
    <property type="match status" value="1"/>
</dbReference>
<dbReference type="Pfam" id="PF00297">
    <property type="entry name" value="Ribosomal_L3"/>
    <property type="match status" value="1"/>
</dbReference>
<dbReference type="SUPFAM" id="SSF50447">
    <property type="entry name" value="Translation proteins"/>
    <property type="match status" value="1"/>
</dbReference>
<dbReference type="PROSITE" id="PS00474">
    <property type="entry name" value="RIBOSOMAL_L3"/>
    <property type="match status" value="1"/>
</dbReference>
<evidence type="ECO:0000255" key="1">
    <source>
        <dbReference type="HAMAP-Rule" id="MF_01325"/>
    </source>
</evidence>
<evidence type="ECO:0000256" key="2">
    <source>
        <dbReference type="SAM" id="MobiDB-lite"/>
    </source>
</evidence>
<evidence type="ECO:0000305" key="3"/>
<reference key="1">
    <citation type="journal article" date="2001" name="Proc. Natl. Acad. Sci. U.S.A.">
        <title>Genome sequence of an industrial microorganism Streptomyces avermitilis: deducing the ability of producing secondary metabolites.</title>
        <authorList>
            <person name="Omura S."/>
            <person name="Ikeda H."/>
            <person name="Ishikawa J."/>
            <person name="Hanamoto A."/>
            <person name="Takahashi C."/>
            <person name="Shinose M."/>
            <person name="Takahashi Y."/>
            <person name="Horikawa H."/>
            <person name="Nakazawa H."/>
            <person name="Osonoe T."/>
            <person name="Kikuchi H."/>
            <person name="Shiba T."/>
            <person name="Sakaki Y."/>
            <person name="Hattori M."/>
        </authorList>
    </citation>
    <scope>NUCLEOTIDE SEQUENCE [LARGE SCALE GENOMIC DNA]</scope>
    <source>
        <strain>ATCC 31267 / DSM 46492 / JCM 5070 / NBRC 14893 / NCIMB 12804 / NRRL 8165 / MA-4680</strain>
    </source>
</reference>
<reference key="2">
    <citation type="journal article" date="2003" name="Nat. Biotechnol.">
        <title>Complete genome sequence and comparative analysis of the industrial microorganism Streptomyces avermitilis.</title>
        <authorList>
            <person name="Ikeda H."/>
            <person name="Ishikawa J."/>
            <person name="Hanamoto A."/>
            <person name="Shinose M."/>
            <person name="Kikuchi H."/>
            <person name="Shiba T."/>
            <person name="Sakaki Y."/>
            <person name="Hattori M."/>
            <person name="Omura S."/>
        </authorList>
    </citation>
    <scope>NUCLEOTIDE SEQUENCE [LARGE SCALE GENOMIC DNA]</scope>
    <source>
        <strain>ATCC 31267 / DSM 46492 / JCM 5070 / NBRC 14893 / NCIMB 12804 / NRRL 8165 / MA-4680</strain>
    </source>
</reference>
<protein>
    <recommendedName>
        <fullName evidence="1">Large ribosomal subunit protein uL3</fullName>
    </recommendedName>
    <alternativeName>
        <fullName evidence="3">50S ribosomal protein L3</fullName>
    </alternativeName>
</protein>
<name>RL3_STRAW</name>
<accession>Q82DP5</accession>